<feature type="chain" id="PRO_0000421933" description="Cytochrome P450 71AV8">
    <location>
        <begin position="1"/>
        <end position="496"/>
    </location>
</feature>
<feature type="transmembrane region" description="Helical" evidence="2">
    <location>
        <begin position="3"/>
        <end position="23"/>
    </location>
</feature>
<feature type="binding site" description="axial binding residue" evidence="1">
    <location>
        <position position="432"/>
    </location>
    <ligand>
        <name>heme</name>
        <dbReference type="ChEBI" id="CHEBI:30413"/>
    </ligand>
    <ligandPart>
        <name>Fe</name>
        <dbReference type="ChEBI" id="CHEBI:18248"/>
    </ligandPart>
</feature>
<name>C7AV8_CICIN</name>
<evidence type="ECO:0000250" key="1"/>
<evidence type="ECO:0000255" key="2"/>
<evidence type="ECO:0000305" key="3"/>
<gene>
    <name type="primary">CYP71AV8</name>
</gene>
<proteinExistence type="evidence at transcript level"/>
<comment type="function">
    <text>Valencene oxidase, which preferentially hydroylates the C2 position of (+)-valencene in the trans-orientation, producing trans-nootkatol that can be further oxidized to (+)-nootkatone. Can also catalyze the three-step conversion of germacrene A to germacra-1(10),4,11(13)-trien-12-oic acid and the partial conversion of the non-natural substrate amorpha-4,11-diene into artemisinic alcohol and artemisinic aldehyde.</text>
</comment>
<comment type="cofactor">
    <cofactor evidence="1">
        <name>heme</name>
        <dbReference type="ChEBI" id="CHEBI:30413"/>
    </cofactor>
</comment>
<comment type="subcellular location">
    <subcellularLocation>
        <location evidence="3">Membrane</location>
        <topology evidence="3">Single-pass membrane protein</topology>
    </subcellularLocation>
</comment>
<comment type="similarity">
    <text evidence="3">Belongs to the cytochrome P450 family.</text>
</comment>
<reference key="1">
    <citation type="journal article" date="2011" name="FEBS Lett.">
        <title>A chicory cytochrome P450 mono-oxygenase CYP71AV8 for the oxidation of (+)-valencene.</title>
        <authorList>
            <person name="Cankar K."/>
            <person name="Houwelingen A."/>
            <person name="Bosch D."/>
            <person name="Sonke T."/>
            <person name="Bouwmeester H."/>
            <person name="Beekwilder J."/>
        </authorList>
    </citation>
    <scope>NUCLEOTIDE SEQUENCE [MRNA]</scope>
</reference>
<organism>
    <name type="scientific">Cichorium intybus</name>
    <name type="common">Chicory</name>
    <dbReference type="NCBI Taxonomy" id="13427"/>
    <lineage>
        <taxon>Eukaryota</taxon>
        <taxon>Viridiplantae</taxon>
        <taxon>Streptophyta</taxon>
        <taxon>Embryophyta</taxon>
        <taxon>Tracheophyta</taxon>
        <taxon>Spermatophyta</taxon>
        <taxon>Magnoliopsida</taxon>
        <taxon>eudicotyledons</taxon>
        <taxon>Gunneridae</taxon>
        <taxon>Pentapetalae</taxon>
        <taxon>asterids</taxon>
        <taxon>campanulids</taxon>
        <taxon>Asterales</taxon>
        <taxon>Asteraceae</taxon>
        <taxon>Cichorioideae</taxon>
        <taxon>Cichorieae</taxon>
        <taxon>Cichoriinae</taxon>
        <taxon>Cichorium</taxon>
    </lineage>
</organism>
<sequence>MEISIPTTLGLAVIIFIIFKLLTRTTSKKNLLPEPWRLPIIGHMHHLIGTMPHRGVMELARKHGSLMHLQLGEVSTIVVSSPRWAKEVLTTYDITFANRPETLTGEIVAYHNTDIVLAPYGEYWRQLRKLCTLELLSNKKVKSFQSLREEECWNLVKDIRSTGQGSPINLSENIFKMIATILSRAAFGKGIKDQMKFTELVKEILRLTGGFDVADIFPSKKLLHHLSGKRAKLTNIHNKLDNLINNIIAEHPGNRTSSSQETLLDVLLRLKESAEFPLTADNVKAVILDMFGAGTDTSSATIEWAISELIRCPRAMEKVQTELRQALNGKERIQEEDLQELNYLKLVIKETLRLHPPLPLVMPRECREPCVLGGYDIPSKTKLIVNVFAINRDPEYWKDAETFMPERFENSPITVMGSEYEYLPFGAGRRMCPGAALGLANVELPLAHILYYFNWKLPNGKTFEDLDMTESFGATVQRKTELLLVPTDFQTLTAST</sequence>
<accession>E1B2Z9</accession>
<keyword id="KW-0349">Heme</keyword>
<keyword id="KW-0408">Iron</keyword>
<keyword id="KW-0472">Membrane</keyword>
<keyword id="KW-0479">Metal-binding</keyword>
<keyword id="KW-0503">Monooxygenase</keyword>
<keyword id="KW-0560">Oxidoreductase</keyword>
<keyword id="KW-0812">Transmembrane</keyword>
<keyword id="KW-1133">Transmembrane helix</keyword>
<protein>
    <recommendedName>
        <fullName>Cytochrome P450 71AV8</fullName>
    </recommendedName>
    <alternativeName>
        <fullName>(+)-Valencene oxidase</fullName>
        <ecNumber>1.14.13.-</ecNumber>
    </alternativeName>
</protein>
<dbReference type="EC" id="1.14.13.-"/>
<dbReference type="EMBL" id="HQ166835">
    <property type="protein sequence ID" value="ADM86719.1"/>
    <property type="molecule type" value="mRNA"/>
</dbReference>
<dbReference type="SMR" id="E1B2Z9"/>
<dbReference type="GO" id="GO:0016020">
    <property type="term" value="C:membrane"/>
    <property type="evidence" value="ECO:0007669"/>
    <property type="project" value="UniProtKB-SubCell"/>
</dbReference>
<dbReference type="GO" id="GO:0020037">
    <property type="term" value="F:heme binding"/>
    <property type="evidence" value="ECO:0007669"/>
    <property type="project" value="InterPro"/>
</dbReference>
<dbReference type="GO" id="GO:0005506">
    <property type="term" value="F:iron ion binding"/>
    <property type="evidence" value="ECO:0007669"/>
    <property type="project" value="InterPro"/>
</dbReference>
<dbReference type="GO" id="GO:0004497">
    <property type="term" value="F:monooxygenase activity"/>
    <property type="evidence" value="ECO:0007669"/>
    <property type="project" value="UniProtKB-KW"/>
</dbReference>
<dbReference type="GO" id="GO:0016705">
    <property type="term" value="F:oxidoreductase activity, acting on paired donors, with incorporation or reduction of molecular oxygen"/>
    <property type="evidence" value="ECO:0007669"/>
    <property type="project" value="InterPro"/>
</dbReference>
<dbReference type="GO" id="GO:0051762">
    <property type="term" value="P:sesquiterpene biosynthetic process"/>
    <property type="evidence" value="ECO:0007669"/>
    <property type="project" value="UniProtKB-ARBA"/>
</dbReference>
<dbReference type="CDD" id="cd11072">
    <property type="entry name" value="CYP71-like"/>
    <property type="match status" value="1"/>
</dbReference>
<dbReference type="FunFam" id="1.10.630.10:FF:000043">
    <property type="entry name" value="Cytochrome P450 99A2"/>
    <property type="match status" value="1"/>
</dbReference>
<dbReference type="Gene3D" id="1.10.630.10">
    <property type="entry name" value="Cytochrome P450"/>
    <property type="match status" value="1"/>
</dbReference>
<dbReference type="InterPro" id="IPR001128">
    <property type="entry name" value="Cyt_P450"/>
</dbReference>
<dbReference type="InterPro" id="IPR017972">
    <property type="entry name" value="Cyt_P450_CS"/>
</dbReference>
<dbReference type="InterPro" id="IPR002401">
    <property type="entry name" value="Cyt_P450_E_grp-I"/>
</dbReference>
<dbReference type="InterPro" id="IPR036396">
    <property type="entry name" value="Cyt_P450_sf"/>
</dbReference>
<dbReference type="PANTHER" id="PTHR47955">
    <property type="entry name" value="CYTOCHROME P450 FAMILY 71 PROTEIN"/>
    <property type="match status" value="1"/>
</dbReference>
<dbReference type="PANTHER" id="PTHR47955:SF9">
    <property type="entry name" value="PREMNASPIRODIENE OXYGENASE-LIKE"/>
    <property type="match status" value="1"/>
</dbReference>
<dbReference type="Pfam" id="PF00067">
    <property type="entry name" value="p450"/>
    <property type="match status" value="1"/>
</dbReference>
<dbReference type="PRINTS" id="PR00463">
    <property type="entry name" value="EP450I"/>
</dbReference>
<dbReference type="PRINTS" id="PR00385">
    <property type="entry name" value="P450"/>
</dbReference>
<dbReference type="SUPFAM" id="SSF48264">
    <property type="entry name" value="Cytochrome P450"/>
    <property type="match status" value="1"/>
</dbReference>
<dbReference type="PROSITE" id="PS00086">
    <property type="entry name" value="CYTOCHROME_P450"/>
    <property type="match status" value="1"/>
</dbReference>